<comment type="function">
    <text evidence="1">Beta-1,3-galactosyltransferase that transfers galactose from UDP-galactose to substrates with a terminal glycosyl residue.</text>
</comment>
<comment type="cofactor">
    <cofactor evidence="1">
        <name>Mn(2+)</name>
        <dbReference type="ChEBI" id="CHEBI:29035"/>
    </cofactor>
</comment>
<comment type="pathway">
    <text>Protein modification; protein glycosylation.</text>
</comment>
<comment type="subcellular location">
    <subcellularLocation>
        <location evidence="3">Golgi apparatus membrane</location>
        <topology evidence="3">Single-pass type II membrane protein</topology>
    </subcellularLocation>
</comment>
<comment type="alternative products">
    <event type="alternative splicing"/>
    <isoform>
        <id>Q9C809-1</id>
        <name>1</name>
        <sequence type="displayed"/>
    </isoform>
    <text>A number of isoforms are produced. According to EST sequences.</text>
</comment>
<comment type="similarity">
    <text evidence="3">Belongs to the glycosyltransferase 31 family.</text>
</comment>
<comment type="sequence caution" evidence="3">
    <conflict type="miscellaneous discrepancy">
        <sequence resource="EMBL" id="BX813522"/>
    </conflict>
    <text>Sequencing errors.</text>
</comment>
<feature type="chain" id="PRO_0000359418" description="Probable beta-1,3-galactosyltransferase 8">
    <location>
        <begin position="1"/>
        <end position="395"/>
    </location>
</feature>
<feature type="transmembrane region" description="Helical; Signal-anchor for type II membrane protein" evidence="2">
    <location>
        <begin position="5"/>
        <end position="27"/>
    </location>
</feature>
<feature type="glycosylation site" description="N-linked (GlcNAc...) asparagine" evidence="2">
    <location>
        <position position="117"/>
    </location>
</feature>
<sequence length="395" mass="44732">MRAKAASGKAIIVLCLASFLAGSLFMSRTLSRSYIPEEEDHHLTKHLSKHLEIQKDCDEHKRKLIESKSRDIIGEVSRTHQAVKSLERTMSTLEMELAAARTSDRSSEFWSERSAKNQSRLQKVFAVIGINTAFSSKKRRDSVRQTWMPTGEKLKKIEKEKGIVVRFVIGHSATPGGVLDKAIDEEDSEHKDFLRLKHIEGYHQLSTKTRLYFSTATAMYDAEFYVKVDDDVHVNLGMLVTTLARYQSRPRIYIGCMKSGPVLSQKGVKYHEPEFWKFGEEGNKYFRHATGQIYAISKDLATYISTNQGILHRYANEDVSLGAWMLGLEVEHVDERSMCCGTPPDCQWKAQAGNVCAASFDWSCSGICKSVDRMARVHRACAEGDTPLANFRFFV</sequence>
<dbReference type="EC" id="2.4.1.-"/>
<dbReference type="EMBL" id="AC051630">
    <property type="protein sequence ID" value="AAG51207.1"/>
    <property type="molecule type" value="Genomic_DNA"/>
</dbReference>
<dbReference type="EMBL" id="CP002684">
    <property type="protein sequence ID" value="AEE31593.1"/>
    <property type="molecule type" value="Genomic_DNA"/>
</dbReference>
<dbReference type="EMBL" id="BX813522">
    <property type="status" value="NOT_ANNOTATED_CDS"/>
    <property type="molecule type" value="mRNA"/>
</dbReference>
<dbReference type="PIR" id="A86458">
    <property type="entry name" value="A86458"/>
</dbReference>
<dbReference type="RefSeq" id="NP_174609.1">
    <molecule id="Q9C809-1"/>
    <property type="nucleotide sequence ID" value="NM_103068.2"/>
</dbReference>
<dbReference type="SMR" id="Q9C809"/>
<dbReference type="BioGRID" id="25470">
    <property type="interactions" value="1"/>
</dbReference>
<dbReference type="FunCoup" id="Q9C809">
    <property type="interactions" value="1642"/>
</dbReference>
<dbReference type="IntAct" id="Q9C809">
    <property type="interactions" value="1"/>
</dbReference>
<dbReference type="STRING" id="3702.Q9C809"/>
<dbReference type="CAZy" id="GT31">
    <property type="family name" value="Glycosyltransferase Family 31"/>
</dbReference>
<dbReference type="GlyCosmos" id="Q9C809">
    <property type="glycosylation" value="1 site, No reported glycans"/>
</dbReference>
<dbReference type="GlyGen" id="Q9C809">
    <property type="glycosylation" value="2 sites"/>
</dbReference>
<dbReference type="iPTMnet" id="Q9C809"/>
<dbReference type="PaxDb" id="3702-AT1G33430.2"/>
<dbReference type="EnsemblPlants" id="AT1G33430.1">
    <molecule id="Q9C809-1"/>
    <property type="protein sequence ID" value="AT1G33430.1"/>
    <property type="gene ID" value="AT1G33430"/>
</dbReference>
<dbReference type="GeneID" id="840236"/>
<dbReference type="Gramene" id="AT1G33430.1">
    <molecule id="Q9C809-1"/>
    <property type="protein sequence ID" value="AT1G33430.1"/>
    <property type="gene ID" value="AT1G33430"/>
</dbReference>
<dbReference type="KEGG" id="ath:AT1G33430"/>
<dbReference type="Araport" id="AT1G33430"/>
<dbReference type="TAIR" id="AT1G33430">
    <property type="gene designation" value="UPEX1"/>
</dbReference>
<dbReference type="eggNOG" id="KOG2288">
    <property type="taxonomic scope" value="Eukaryota"/>
</dbReference>
<dbReference type="HOGENOM" id="CLU_040730_3_0_1"/>
<dbReference type="InParanoid" id="Q9C809"/>
<dbReference type="PhylomeDB" id="Q9C809"/>
<dbReference type="UniPathway" id="UPA00378"/>
<dbReference type="PRO" id="PR:Q9C809"/>
<dbReference type="Proteomes" id="UP000006548">
    <property type="component" value="Chromosome 1"/>
</dbReference>
<dbReference type="ExpressionAtlas" id="Q9C809">
    <property type="expression patterns" value="differential"/>
</dbReference>
<dbReference type="GO" id="GO:0000139">
    <property type="term" value="C:Golgi membrane"/>
    <property type="evidence" value="ECO:0007669"/>
    <property type="project" value="UniProtKB-SubCell"/>
</dbReference>
<dbReference type="GO" id="GO:0016758">
    <property type="term" value="F:hexosyltransferase activity"/>
    <property type="evidence" value="ECO:0007669"/>
    <property type="project" value="InterPro"/>
</dbReference>
<dbReference type="GO" id="GO:0006486">
    <property type="term" value="P:protein glycosylation"/>
    <property type="evidence" value="ECO:0007669"/>
    <property type="project" value="UniProtKB-UniPathway"/>
</dbReference>
<dbReference type="FunFam" id="3.90.550.50:FF:000002">
    <property type="entry name" value="Hexosyltransferase"/>
    <property type="match status" value="1"/>
</dbReference>
<dbReference type="Gene3D" id="3.90.550.50">
    <property type="match status" value="1"/>
</dbReference>
<dbReference type="InterPro" id="IPR025298">
    <property type="entry name" value="DUF4094"/>
</dbReference>
<dbReference type="InterPro" id="IPR002659">
    <property type="entry name" value="Glyco_trans_31"/>
</dbReference>
<dbReference type="PANTHER" id="PTHR11214:SF275">
    <property type="entry name" value="BETA-1,3-GALACTOSYLTRANSFERASE 8-RELATED"/>
    <property type="match status" value="1"/>
</dbReference>
<dbReference type="PANTHER" id="PTHR11214">
    <property type="entry name" value="BETA-1,3-N-ACETYLGLUCOSAMINYLTRANSFERASE"/>
    <property type="match status" value="1"/>
</dbReference>
<dbReference type="Pfam" id="PF13334">
    <property type="entry name" value="DUF4094"/>
    <property type="match status" value="1"/>
</dbReference>
<dbReference type="Pfam" id="PF01762">
    <property type="entry name" value="Galactosyl_T"/>
    <property type="match status" value="1"/>
</dbReference>
<keyword id="KW-0025">Alternative splicing</keyword>
<keyword id="KW-0325">Glycoprotein</keyword>
<keyword id="KW-0328">Glycosyltransferase</keyword>
<keyword id="KW-0333">Golgi apparatus</keyword>
<keyword id="KW-0464">Manganese</keyword>
<keyword id="KW-0472">Membrane</keyword>
<keyword id="KW-1185">Reference proteome</keyword>
<keyword id="KW-0735">Signal-anchor</keyword>
<keyword id="KW-0808">Transferase</keyword>
<keyword id="KW-0812">Transmembrane</keyword>
<keyword id="KW-1133">Transmembrane helix</keyword>
<organism>
    <name type="scientific">Arabidopsis thaliana</name>
    <name type="common">Mouse-ear cress</name>
    <dbReference type="NCBI Taxonomy" id="3702"/>
    <lineage>
        <taxon>Eukaryota</taxon>
        <taxon>Viridiplantae</taxon>
        <taxon>Streptophyta</taxon>
        <taxon>Embryophyta</taxon>
        <taxon>Tracheophyta</taxon>
        <taxon>Spermatophyta</taxon>
        <taxon>Magnoliopsida</taxon>
        <taxon>eudicotyledons</taxon>
        <taxon>Gunneridae</taxon>
        <taxon>Pentapetalae</taxon>
        <taxon>rosids</taxon>
        <taxon>malvids</taxon>
        <taxon>Brassicales</taxon>
        <taxon>Brassicaceae</taxon>
        <taxon>Camelineae</taxon>
        <taxon>Arabidopsis</taxon>
    </lineage>
</organism>
<reference key="1">
    <citation type="journal article" date="2000" name="Nature">
        <title>Sequence and analysis of chromosome 1 of the plant Arabidopsis thaliana.</title>
        <authorList>
            <person name="Theologis A."/>
            <person name="Ecker J.R."/>
            <person name="Palm C.J."/>
            <person name="Federspiel N.A."/>
            <person name="Kaul S."/>
            <person name="White O."/>
            <person name="Alonso J."/>
            <person name="Altafi H."/>
            <person name="Araujo R."/>
            <person name="Bowman C.L."/>
            <person name="Brooks S.Y."/>
            <person name="Buehler E."/>
            <person name="Chan A."/>
            <person name="Chao Q."/>
            <person name="Chen H."/>
            <person name="Cheuk R.F."/>
            <person name="Chin C.W."/>
            <person name="Chung M.K."/>
            <person name="Conn L."/>
            <person name="Conway A.B."/>
            <person name="Conway A.R."/>
            <person name="Creasy T.H."/>
            <person name="Dewar K."/>
            <person name="Dunn P."/>
            <person name="Etgu P."/>
            <person name="Feldblyum T.V."/>
            <person name="Feng J.-D."/>
            <person name="Fong B."/>
            <person name="Fujii C.Y."/>
            <person name="Gill J.E."/>
            <person name="Goldsmith A.D."/>
            <person name="Haas B."/>
            <person name="Hansen N.F."/>
            <person name="Hughes B."/>
            <person name="Huizar L."/>
            <person name="Hunter J.L."/>
            <person name="Jenkins J."/>
            <person name="Johnson-Hopson C."/>
            <person name="Khan S."/>
            <person name="Khaykin E."/>
            <person name="Kim C.J."/>
            <person name="Koo H.L."/>
            <person name="Kremenetskaia I."/>
            <person name="Kurtz D.B."/>
            <person name="Kwan A."/>
            <person name="Lam B."/>
            <person name="Langin-Hooper S."/>
            <person name="Lee A."/>
            <person name="Lee J.M."/>
            <person name="Lenz C.A."/>
            <person name="Li J.H."/>
            <person name="Li Y.-P."/>
            <person name="Lin X."/>
            <person name="Liu S.X."/>
            <person name="Liu Z.A."/>
            <person name="Luros J.S."/>
            <person name="Maiti R."/>
            <person name="Marziali A."/>
            <person name="Militscher J."/>
            <person name="Miranda M."/>
            <person name="Nguyen M."/>
            <person name="Nierman W.C."/>
            <person name="Osborne B.I."/>
            <person name="Pai G."/>
            <person name="Peterson J."/>
            <person name="Pham P.K."/>
            <person name="Rizzo M."/>
            <person name="Rooney T."/>
            <person name="Rowley D."/>
            <person name="Sakano H."/>
            <person name="Salzberg S.L."/>
            <person name="Schwartz J.R."/>
            <person name="Shinn P."/>
            <person name="Southwick A.M."/>
            <person name="Sun H."/>
            <person name="Tallon L.J."/>
            <person name="Tambunga G."/>
            <person name="Toriumi M.J."/>
            <person name="Town C.D."/>
            <person name="Utterback T."/>
            <person name="Van Aken S."/>
            <person name="Vaysberg M."/>
            <person name="Vysotskaia V.S."/>
            <person name="Walker M."/>
            <person name="Wu D."/>
            <person name="Yu G."/>
            <person name="Fraser C.M."/>
            <person name="Venter J.C."/>
            <person name="Davis R.W."/>
        </authorList>
    </citation>
    <scope>NUCLEOTIDE SEQUENCE [LARGE SCALE GENOMIC DNA]</scope>
    <source>
        <strain>cv. Columbia</strain>
    </source>
</reference>
<reference key="2">
    <citation type="journal article" date="2017" name="Plant J.">
        <title>Araport11: a complete reannotation of the Arabidopsis thaliana reference genome.</title>
        <authorList>
            <person name="Cheng C.Y."/>
            <person name="Krishnakumar V."/>
            <person name="Chan A.P."/>
            <person name="Thibaud-Nissen F."/>
            <person name="Schobel S."/>
            <person name="Town C.D."/>
        </authorList>
    </citation>
    <scope>GENOME REANNOTATION</scope>
    <source>
        <strain>cv. Columbia</strain>
    </source>
</reference>
<reference key="3">
    <citation type="journal article" date="2004" name="Genome Res.">
        <title>Whole genome sequence comparisons and 'full-length' cDNA sequences: a combined approach to evaluate and improve Arabidopsis genome annotation.</title>
        <authorList>
            <person name="Castelli V."/>
            <person name="Aury J.-M."/>
            <person name="Jaillon O."/>
            <person name="Wincker P."/>
            <person name="Clepet C."/>
            <person name="Menard M."/>
            <person name="Cruaud C."/>
            <person name="Quetier F."/>
            <person name="Scarpelli C."/>
            <person name="Schaechter V."/>
            <person name="Temple G."/>
            <person name="Caboche M."/>
            <person name="Weissenbach J."/>
            <person name="Salanoubat M."/>
        </authorList>
    </citation>
    <scope>NUCLEOTIDE SEQUENCE [LARGE SCALE MRNA]</scope>
    <source>
        <strain>cv. Columbia</strain>
    </source>
</reference>
<reference key="4">
    <citation type="journal article" date="2008" name="Plant Mol. Biol.">
        <title>Identification of a novel group of putative Arabidopsis thaliana beta-(1,3)-galactosyltransferases.</title>
        <authorList>
            <person name="Qu Y."/>
            <person name="Egelund J."/>
            <person name="Gilson P.R."/>
            <person name="Houghton F."/>
            <person name="Gleeson P.A."/>
            <person name="Schultz C.J."/>
            <person name="Bacic A."/>
        </authorList>
    </citation>
    <scope>GENE FAMILY</scope>
    <scope>NOMENCLATURE</scope>
</reference>
<protein>
    <recommendedName>
        <fullName>Probable beta-1,3-galactosyltransferase 8</fullName>
        <ecNumber>2.4.1.-</ecNumber>
    </recommendedName>
</protein>
<evidence type="ECO:0000250" key="1"/>
<evidence type="ECO:0000255" key="2"/>
<evidence type="ECO:0000305" key="3"/>
<gene>
    <name type="primary">B3GALT8</name>
    <name type="ordered locus">At1g33430</name>
    <name type="ORF">F10C21.10</name>
</gene>
<accession>Q9C809</accession>
<proteinExistence type="evidence at transcript level"/>
<name>B3GT8_ARATH</name>